<organism>
    <name type="scientific">Clostridium perfringens (strain ATCC 13124 / DSM 756 / JCM 1290 / NCIMB 6125 / NCTC 8237 / Type A)</name>
    <dbReference type="NCBI Taxonomy" id="195103"/>
    <lineage>
        <taxon>Bacteria</taxon>
        <taxon>Bacillati</taxon>
        <taxon>Bacillota</taxon>
        <taxon>Clostridia</taxon>
        <taxon>Eubacteriales</taxon>
        <taxon>Clostridiaceae</taxon>
        <taxon>Clostridium</taxon>
    </lineage>
</organism>
<evidence type="ECO:0000255" key="1">
    <source>
        <dbReference type="HAMAP-Rule" id="MF_00402"/>
    </source>
</evidence>
<evidence type="ECO:0000305" key="2"/>
<reference key="1">
    <citation type="journal article" date="2006" name="Genome Res.">
        <title>Skewed genomic variability in strains of the toxigenic bacterial pathogen, Clostridium perfringens.</title>
        <authorList>
            <person name="Myers G.S.A."/>
            <person name="Rasko D.A."/>
            <person name="Cheung J.K."/>
            <person name="Ravel J."/>
            <person name="Seshadri R."/>
            <person name="DeBoy R.T."/>
            <person name="Ren Q."/>
            <person name="Varga J."/>
            <person name="Awad M.M."/>
            <person name="Brinkac L.M."/>
            <person name="Daugherty S.C."/>
            <person name="Haft D.H."/>
            <person name="Dodson R.J."/>
            <person name="Madupu R."/>
            <person name="Nelson W.C."/>
            <person name="Rosovitz M.J."/>
            <person name="Sullivan S.A."/>
            <person name="Khouri H."/>
            <person name="Dimitrov G.I."/>
            <person name="Watkins K.L."/>
            <person name="Mulligan S."/>
            <person name="Benton J."/>
            <person name="Radune D."/>
            <person name="Fisher D.J."/>
            <person name="Atkins H.S."/>
            <person name="Hiscox T."/>
            <person name="Jost B.H."/>
            <person name="Billington S.J."/>
            <person name="Songer J.G."/>
            <person name="McClane B.A."/>
            <person name="Titball R.W."/>
            <person name="Rood J.I."/>
            <person name="Melville S.B."/>
            <person name="Paulsen I.T."/>
        </authorList>
    </citation>
    <scope>NUCLEOTIDE SEQUENCE [LARGE SCALE GENOMIC DNA]</scope>
    <source>
        <strain>ATCC 13124 / DSM 756 / JCM 1290 / NCIMB 6125 / NCTC 8237 / S 107 / Type A</strain>
    </source>
</reference>
<comment type="function">
    <text evidence="1">This protein is located at the 30S-50S ribosomal subunit interface and may play a role in the structure and function of the aminoacyl-tRNA binding site.</text>
</comment>
<comment type="similarity">
    <text evidence="1">Belongs to the bacterial ribosomal protein bL19 family.</text>
</comment>
<dbReference type="EMBL" id="CP000246">
    <property type="protein sequence ID" value="ABG84854.1"/>
    <property type="molecule type" value="Genomic_DNA"/>
</dbReference>
<dbReference type="RefSeq" id="WP_003449446.1">
    <property type="nucleotide sequence ID" value="NC_008261.1"/>
</dbReference>
<dbReference type="SMR" id="Q0TPP5"/>
<dbReference type="STRING" id="195103.CPF_1962"/>
<dbReference type="PaxDb" id="195103-CPF_1962"/>
<dbReference type="GeneID" id="93001754"/>
<dbReference type="KEGG" id="cpf:CPF_1962"/>
<dbReference type="eggNOG" id="COG0335">
    <property type="taxonomic scope" value="Bacteria"/>
</dbReference>
<dbReference type="HOGENOM" id="CLU_103507_2_1_9"/>
<dbReference type="Proteomes" id="UP000001823">
    <property type="component" value="Chromosome"/>
</dbReference>
<dbReference type="GO" id="GO:0022625">
    <property type="term" value="C:cytosolic large ribosomal subunit"/>
    <property type="evidence" value="ECO:0007669"/>
    <property type="project" value="TreeGrafter"/>
</dbReference>
<dbReference type="GO" id="GO:0003735">
    <property type="term" value="F:structural constituent of ribosome"/>
    <property type="evidence" value="ECO:0007669"/>
    <property type="project" value="InterPro"/>
</dbReference>
<dbReference type="GO" id="GO:0006412">
    <property type="term" value="P:translation"/>
    <property type="evidence" value="ECO:0007669"/>
    <property type="project" value="UniProtKB-UniRule"/>
</dbReference>
<dbReference type="FunFam" id="2.30.30.790:FF:000001">
    <property type="entry name" value="50S ribosomal protein L19"/>
    <property type="match status" value="1"/>
</dbReference>
<dbReference type="Gene3D" id="2.30.30.790">
    <property type="match status" value="1"/>
</dbReference>
<dbReference type="HAMAP" id="MF_00402">
    <property type="entry name" value="Ribosomal_bL19"/>
    <property type="match status" value="1"/>
</dbReference>
<dbReference type="InterPro" id="IPR001857">
    <property type="entry name" value="Ribosomal_bL19"/>
</dbReference>
<dbReference type="InterPro" id="IPR018257">
    <property type="entry name" value="Ribosomal_bL19_CS"/>
</dbReference>
<dbReference type="InterPro" id="IPR038657">
    <property type="entry name" value="Ribosomal_bL19_sf"/>
</dbReference>
<dbReference type="InterPro" id="IPR008991">
    <property type="entry name" value="Translation_prot_SH3-like_sf"/>
</dbReference>
<dbReference type="NCBIfam" id="TIGR01024">
    <property type="entry name" value="rplS_bact"/>
    <property type="match status" value="1"/>
</dbReference>
<dbReference type="PANTHER" id="PTHR15680:SF9">
    <property type="entry name" value="LARGE RIBOSOMAL SUBUNIT PROTEIN BL19M"/>
    <property type="match status" value="1"/>
</dbReference>
<dbReference type="PANTHER" id="PTHR15680">
    <property type="entry name" value="RIBOSOMAL PROTEIN L19"/>
    <property type="match status" value="1"/>
</dbReference>
<dbReference type="Pfam" id="PF01245">
    <property type="entry name" value="Ribosomal_L19"/>
    <property type="match status" value="1"/>
</dbReference>
<dbReference type="PIRSF" id="PIRSF002191">
    <property type="entry name" value="Ribosomal_L19"/>
    <property type="match status" value="1"/>
</dbReference>
<dbReference type="PRINTS" id="PR00061">
    <property type="entry name" value="RIBOSOMALL19"/>
</dbReference>
<dbReference type="SUPFAM" id="SSF50104">
    <property type="entry name" value="Translation proteins SH3-like domain"/>
    <property type="match status" value="1"/>
</dbReference>
<dbReference type="PROSITE" id="PS01015">
    <property type="entry name" value="RIBOSOMAL_L19"/>
    <property type="match status" value="1"/>
</dbReference>
<keyword id="KW-0687">Ribonucleoprotein</keyword>
<keyword id="KW-0689">Ribosomal protein</keyword>
<gene>
    <name evidence="1" type="primary">rplS</name>
    <name type="ordered locus">CPF_1962</name>
</gene>
<proteinExistence type="inferred from homology"/>
<protein>
    <recommendedName>
        <fullName evidence="1">Large ribosomal subunit protein bL19</fullName>
    </recommendedName>
    <alternativeName>
        <fullName evidence="2">50S ribosomal protein L19</fullName>
    </alternativeName>
</protein>
<accession>Q0TPP5</accession>
<sequence>MNEIIRAIEKEQIREDLTQFNIGDTIKVHVRIKEGNRERIQVFEGTVIKKQNGGLRETFTVRRVAYGVGVERTFPINAPIIDKIDVVRRGKVRRAKLFYLRDRVGKAAKVKELTR</sequence>
<name>RL19_CLOP1</name>
<feature type="chain" id="PRO_1000049665" description="Large ribosomal subunit protein bL19">
    <location>
        <begin position="1"/>
        <end position="115"/>
    </location>
</feature>